<accession>Q86UV6</accession>
<accession>B7WP46</accession>
<evidence type="ECO:0000255" key="1"/>
<evidence type="ECO:0000255" key="2">
    <source>
        <dbReference type="PROSITE-ProRule" id="PRU00024"/>
    </source>
</evidence>
<evidence type="ECO:0000255" key="3">
    <source>
        <dbReference type="PROSITE-ProRule" id="PRU00175"/>
    </source>
</evidence>
<evidence type="ECO:0000269" key="4">
    <source>
    </source>
</evidence>
<evidence type="ECO:0000303" key="5">
    <source>
    </source>
</evidence>
<evidence type="ECO:0000305" key="6"/>
<proteinExistence type="evidence at protein level"/>
<feature type="chain" id="PRO_0000056279" description="Tripartite motif-containing protein 74">
    <location>
        <begin position="1"/>
        <end position="250"/>
    </location>
</feature>
<feature type="zinc finger region" description="RING-type" evidence="3">
    <location>
        <begin position="16"/>
        <end position="57"/>
    </location>
</feature>
<feature type="zinc finger region" description="B box-type" evidence="2">
    <location>
        <begin position="84"/>
        <end position="125"/>
    </location>
</feature>
<feature type="coiled-coil region" evidence="1">
    <location>
        <begin position="125"/>
        <end position="169"/>
    </location>
</feature>
<feature type="coiled-coil region" evidence="1">
    <location>
        <begin position="204"/>
        <end position="235"/>
    </location>
</feature>
<feature type="binding site" evidence="2">
    <location>
        <position position="89"/>
    </location>
    <ligand>
        <name>Zn(2+)</name>
        <dbReference type="ChEBI" id="CHEBI:29105"/>
    </ligand>
</feature>
<feature type="binding site" evidence="2">
    <location>
        <position position="92"/>
    </location>
    <ligand>
        <name>Zn(2+)</name>
        <dbReference type="ChEBI" id="CHEBI:29105"/>
    </ligand>
</feature>
<feature type="binding site" evidence="2">
    <location>
        <position position="111"/>
    </location>
    <ligand>
        <name>Zn(2+)</name>
        <dbReference type="ChEBI" id="CHEBI:29105"/>
    </ligand>
</feature>
<feature type="binding site" evidence="2">
    <location>
        <position position="117"/>
    </location>
    <ligand>
        <name>Zn(2+)</name>
        <dbReference type="ChEBI" id="CHEBI:29105"/>
    </ligand>
</feature>
<feature type="splice variant" id="VSP_032087" description="In isoform 2." evidence="5">
    <location>
        <position position="243"/>
    </location>
</feature>
<feature type="sequence variant" id="VAR_039576" description="In dbSNP:rs121966." evidence="4">
    <original>W</original>
    <variation>R</variation>
    <location>
        <position position="13"/>
    </location>
</feature>
<feature type="sequence conflict" description="In Ref. 3; AAH33871." evidence="6" ref="3">
    <original>V</original>
    <variation>I</variation>
    <location>
        <position position="128"/>
    </location>
</feature>
<feature type="sequence conflict" description="In Ref. 3; AAH33871." evidence="6" ref="3">
    <original>K</original>
    <variation>N</variation>
    <location>
        <position position="159"/>
    </location>
</feature>
<comment type="interaction">
    <interactant intactId="EBI-10259086">
        <id>Q86UV6-2</id>
    </interactant>
    <interactant intactId="EBI-948603">
        <id>Q03989</id>
        <label>ARID5A</label>
    </interactant>
    <organismsDiffer>false</organismsDiffer>
    <experiments>3</experiments>
</comment>
<comment type="interaction">
    <interactant intactId="EBI-10259086">
        <id>Q86UV6-2</id>
    </interactant>
    <interactant intactId="EBI-930964">
        <id>P54253</id>
        <label>ATXN1</label>
    </interactant>
    <organismsDiffer>false</organismsDiffer>
    <experiments>6</experiments>
</comment>
<comment type="interaction">
    <interactant intactId="EBI-10259086">
        <id>Q86UV6-2</id>
    </interactant>
    <interactant intactId="EBI-745073">
        <id>Q9BXY8</id>
        <label>BEX2</label>
    </interactant>
    <organismsDiffer>false</organismsDiffer>
    <experiments>3</experiments>
</comment>
<comment type="interaction">
    <interactant intactId="EBI-10259086">
        <id>Q86UV6-2</id>
    </interactant>
    <interactant intactId="EBI-2961725">
        <id>Q96LT7</id>
        <label>C9orf72</label>
    </interactant>
    <organismsDiffer>false</organismsDiffer>
    <experiments>3</experiments>
</comment>
<comment type="interaction">
    <interactant intactId="EBI-10259086">
        <id>Q86UV6-2</id>
    </interactant>
    <interactant intactId="EBI-742054">
        <id>Q96D03</id>
        <label>DDIT4L</label>
    </interactant>
    <organismsDiffer>false</organismsDiffer>
    <experiments>3</experiments>
</comment>
<comment type="interaction">
    <interactant intactId="EBI-10259086">
        <id>Q86UV6-2</id>
    </interactant>
    <interactant intactId="EBI-701903">
        <id>Q14192</id>
        <label>FHL2</label>
    </interactant>
    <organismsDiffer>false</organismsDiffer>
    <experiments>3</experiments>
</comment>
<comment type="interaction">
    <interactant intactId="EBI-10259086">
        <id>Q86UV6-2</id>
    </interactant>
    <interactant intactId="EBI-1046668">
        <id>P63215</id>
        <label>GNG3</label>
    </interactant>
    <organismsDiffer>false</organismsDiffer>
    <experiments>3</experiments>
</comment>
<comment type="interaction">
    <interactant intactId="EBI-10259086">
        <id>Q86UV6-2</id>
    </interactant>
    <interactant intactId="EBI-740220">
        <id>O14964</id>
        <label>HGS</label>
    </interactant>
    <organismsDiffer>false</organismsDiffer>
    <experiments>5</experiments>
</comment>
<comment type="interaction">
    <interactant intactId="EBI-10259086">
        <id>Q86UV6-2</id>
    </interactant>
    <interactant intactId="EBI-1047093">
        <id>O76011</id>
        <label>KRT34</label>
    </interactant>
    <organismsDiffer>false</organismsDiffer>
    <experiments>3</experiments>
</comment>
<comment type="interaction">
    <interactant intactId="EBI-10259086">
        <id>Q86UV6-2</id>
    </interactant>
    <interactant intactId="EBI-1189067">
        <id>P51608</id>
        <label>MECP2</label>
    </interactant>
    <organismsDiffer>false</organismsDiffer>
    <experiments>3</experiments>
</comment>
<comment type="interaction">
    <interactant intactId="EBI-10259086">
        <id>Q86UV6-2</id>
    </interactant>
    <interactant intactId="EBI-713665">
        <id>P19404</id>
        <label>NDUFV2</label>
    </interactant>
    <organismsDiffer>false</organismsDiffer>
    <experiments>3</experiments>
</comment>
<comment type="interaction">
    <interactant intactId="EBI-10259086">
        <id>Q86UV6-2</id>
    </interactant>
    <interactant intactId="EBI-741158">
        <id>Q96HA8</id>
        <label>NTAQ1</label>
    </interactant>
    <organismsDiffer>false</organismsDiffer>
    <experiments>3</experiments>
</comment>
<comment type="interaction">
    <interactant intactId="EBI-10259086">
        <id>Q86UV6-2</id>
    </interactant>
    <interactant intactId="EBI-536879">
        <id>O43482</id>
        <label>OIP5</label>
    </interactant>
    <organismsDiffer>false</organismsDiffer>
    <experiments>3</experiments>
</comment>
<comment type="interaction">
    <interactant intactId="EBI-10259086">
        <id>Q86UV6-2</id>
    </interactant>
    <interactant intactId="EBI-721853">
        <id>O14832</id>
        <label>PHYH</label>
    </interactant>
    <organismsDiffer>false</organismsDiffer>
    <experiments>3</experiments>
</comment>
<comment type="interaction">
    <interactant intactId="EBI-10259086">
        <id>Q86UV6-2</id>
    </interactant>
    <interactant intactId="EBI-302345">
        <id>Q8ND90</id>
        <label>PNMA1</label>
    </interactant>
    <organismsDiffer>false</organismsDiffer>
    <experiments>3</experiments>
</comment>
<comment type="interaction">
    <interactant intactId="EBI-10259086">
        <id>Q86UV6-2</id>
    </interactant>
    <interactant intactId="EBI-12029004">
        <id>P78424</id>
        <label>POU6F2</label>
    </interactant>
    <organismsDiffer>false</organismsDiffer>
    <experiments>3</experiments>
</comment>
<comment type="interaction">
    <interactant intactId="EBI-10259086">
        <id>Q86UV6-2</id>
    </interactant>
    <interactant intactId="EBI-11986293">
        <id>P0CG20</id>
        <label>PRR35</label>
    </interactant>
    <organismsDiffer>false</organismsDiffer>
    <experiments>3</experiments>
</comment>
<comment type="interaction">
    <interactant intactId="EBI-10259086">
        <id>Q86UV6-2</id>
    </interactant>
    <interactant intactId="EBI-945916">
        <id>Q92530</id>
        <label>PSMF1</label>
    </interactant>
    <organismsDiffer>false</organismsDiffer>
    <experiments>3</experiments>
</comment>
<comment type="interaction">
    <interactant intactId="EBI-10259086">
        <id>Q86UV6-2</id>
    </interactant>
    <interactant intactId="EBI-307352">
        <id>Q04864</id>
        <label>REL</label>
    </interactant>
    <organismsDiffer>false</organismsDiffer>
    <experiments>3</experiments>
</comment>
<comment type="interaction">
    <interactant intactId="EBI-10259086">
        <id>Q86UV6-2</id>
    </interactant>
    <interactant intactId="EBI-6257312">
        <id>Q9BVN2</id>
        <label>RUSC1</label>
    </interactant>
    <organismsDiffer>false</organismsDiffer>
    <experiments>3</experiments>
</comment>
<comment type="interaction">
    <interactant intactId="EBI-10259086">
        <id>Q86UV6-2</id>
    </interactant>
    <interactant intactId="EBI-5235340">
        <id>Q7Z699</id>
        <label>SPRED1</label>
    </interactant>
    <organismsDiffer>false</organismsDiffer>
    <experiments>3</experiments>
</comment>
<comment type="interaction">
    <interactant intactId="EBI-10259086">
        <id>Q86UV6-2</id>
    </interactant>
    <interactant intactId="EBI-3921347">
        <id>P51687</id>
        <label>SUOX</label>
    </interactant>
    <organismsDiffer>false</organismsDiffer>
    <experiments>3</experiments>
</comment>
<comment type="interaction">
    <interactant intactId="EBI-10259086">
        <id>Q86UV6-2</id>
    </interactant>
    <interactant intactId="EBI-372899">
        <id>Q13148</id>
        <label>TARDBP</label>
    </interactant>
    <organismsDiffer>false</organismsDiffer>
    <experiments>3</experiments>
</comment>
<comment type="interaction">
    <interactant intactId="EBI-10259086">
        <id>Q86UV6-2</id>
    </interactant>
    <interactant intactId="EBI-745958">
        <id>Q5VWN6</id>
        <label>TASOR2</label>
    </interactant>
    <organismsDiffer>false</organismsDiffer>
    <experiments>3</experiments>
</comment>
<comment type="interaction">
    <interactant intactId="EBI-10259086">
        <id>Q86UV6-2</id>
    </interactant>
    <interactant intactId="EBI-9090990">
        <id>Q5W5X9-3</id>
        <label>TTC23</label>
    </interactant>
    <organismsDiffer>false</organismsDiffer>
    <experiments>3</experiments>
</comment>
<comment type="alternative products">
    <event type="alternative splicing"/>
    <isoform>
        <id>Q86UV6-1</id>
        <name>1</name>
        <sequence type="displayed"/>
    </isoform>
    <isoform>
        <id>Q86UV6-2</id>
        <name>2</name>
        <sequence type="described" ref="VSP_032087"/>
    </isoform>
</comment>
<comment type="similarity">
    <text evidence="6">Belongs to the TRIM/RBCC family.</text>
</comment>
<gene>
    <name type="primary">TRIM74</name>
    <name type="synonym">TRIM50C</name>
</gene>
<dbReference type="EMBL" id="AF498999">
    <property type="protein sequence ID" value="AAP30736.1"/>
    <property type="molecule type" value="mRNA"/>
</dbReference>
<dbReference type="EMBL" id="AC005488">
    <property type="status" value="NOT_ANNOTATED_CDS"/>
    <property type="molecule type" value="Genomic_DNA"/>
</dbReference>
<dbReference type="EMBL" id="BC033871">
    <property type="protein sequence ID" value="AAH33871.1"/>
    <property type="molecule type" value="mRNA"/>
</dbReference>
<dbReference type="CCDS" id="CCDS5545.1">
    <molecule id="Q86UV6-1"/>
</dbReference>
<dbReference type="RefSeq" id="NP_001304744.1">
    <molecule id="Q86UV6-1"/>
    <property type="nucleotide sequence ID" value="NM_001317815.2"/>
</dbReference>
<dbReference type="RefSeq" id="NP_942150.1">
    <molecule id="Q86UV6-1"/>
    <property type="nucleotide sequence ID" value="NM_198853.3"/>
</dbReference>
<dbReference type="RefSeq" id="XP_011514489.1">
    <molecule id="Q86UV6-1"/>
    <property type="nucleotide sequence ID" value="XM_011516187.4"/>
</dbReference>
<dbReference type="RefSeq" id="XP_011514491.1">
    <molecule id="Q86UV6-2"/>
    <property type="nucleotide sequence ID" value="XM_011516189.3"/>
</dbReference>
<dbReference type="RefSeq" id="XP_047276306.1">
    <molecule id="Q86UV6-2"/>
    <property type="nucleotide sequence ID" value="XM_047420350.1"/>
</dbReference>
<dbReference type="SMR" id="Q86UV6"/>
<dbReference type="BioGRID" id="132031">
    <property type="interactions" value="18"/>
</dbReference>
<dbReference type="FunCoup" id="Q86UV6">
    <property type="interactions" value="7"/>
</dbReference>
<dbReference type="IntAct" id="Q86UV6">
    <property type="interactions" value="37"/>
</dbReference>
<dbReference type="STRING" id="9606.ENSP00000285805"/>
<dbReference type="BioMuta" id="TRIM74"/>
<dbReference type="DMDM" id="56404879"/>
<dbReference type="jPOST" id="Q86UV6"/>
<dbReference type="MassIVE" id="Q86UV6"/>
<dbReference type="PaxDb" id="9606-ENSP00000285805"/>
<dbReference type="PeptideAtlas" id="Q86UV6"/>
<dbReference type="Antibodypedia" id="28389">
    <property type="antibodies" value="89 antibodies from 13 providers"/>
</dbReference>
<dbReference type="DNASU" id="378108"/>
<dbReference type="Ensembl" id="ENST00000285805.3">
    <molecule id="Q86UV6-1"/>
    <property type="protein sequence ID" value="ENSP00000285805.3"/>
    <property type="gene ID" value="ENSG00000155428.12"/>
</dbReference>
<dbReference type="Ensembl" id="ENST00000395244.5">
    <molecule id="Q86UV6-2"/>
    <property type="protein sequence ID" value="ENSP00000378665.1"/>
    <property type="gene ID" value="ENSG00000155428.12"/>
</dbReference>
<dbReference type="GeneID" id="378108"/>
<dbReference type="KEGG" id="hsa:378108"/>
<dbReference type="MANE-Select" id="ENST00000285805.3">
    <property type="protein sequence ID" value="ENSP00000285805.3"/>
    <property type="RefSeq nucleotide sequence ID" value="NM_198853.3"/>
    <property type="RefSeq protein sequence ID" value="NP_942150.1"/>
</dbReference>
<dbReference type="UCSC" id="uc003tws.1">
    <molecule id="Q86UV6-1"/>
    <property type="organism name" value="human"/>
</dbReference>
<dbReference type="AGR" id="HGNC:17453"/>
<dbReference type="CTD" id="378108"/>
<dbReference type="GeneCards" id="TRIM74"/>
<dbReference type="HGNC" id="HGNC:17453">
    <property type="gene designation" value="TRIM74"/>
</dbReference>
<dbReference type="HPA" id="ENSG00000155428">
    <property type="expression patterns" value="Tissue enhanced (stomach, testis)"/>
</dbReference>
<dbReference type="MIM" id="612550">
    <property type="type" value="gene"/>
</dbReference>
<dbReference type="neXtProt" id="NX_Q86UV6"/>
<dbReference type="OpenTargets" id="ENSG00000155428"/>
<dbReference type="PharmGKB" id="PA38454"/>
<dbReference type="VEuPathDB" id="HostDB:ENSG00000155428"/>
<dbReference type="eggNOG" id="KOG2177">
    <property type="taxonomic scope" value="Eukaryota"/>
</dbReference>
<dbReference type="GeneTree" id="ENSGT00940000167700"/>
<dbReference type="HOGENOM" id="CLU_013137_6_3_1"/>
<dbReference type="InParanoid" id="Q86UV6"/>
<dbReference type="OMA" id="NTQLCHV"/>
<dbReference type="OrthoDB" id="6105938at2759"/>
<dbReference type="PAN-GO" id="Q86UV6">
    <property type="GO annotations" value="3 GO annotations based on evolutionary models"/>
</dbReference>
<dbReference type="PhylomeDB" id="Q86UV6"/>
<dbReference type="TreeFam" id="TF342569"/>
<dbReference type="PathwayCommons" id="Q86UV6"/>
<dbReference type="SignaLink" id="Q86UV6"/>
<dbReference type="SIGNOR" id="Q86UV6"/>
<dbReference type="BioGRID-ORCS" id="378108">
    <property type="hits" value="44 hits in 1024 CRISPR screens"/>
</dbReference>
<dbReference type="ChiTaRS" id="TRIM74">
    <property type="organism name" value="human"/>
</dbReference>
<dbReference type="GenomeRNAi" id="378108"/>
<dbReference type="Pharos" id="Q86UV6">
    <property type="development level" value="Tdark"/>
</dbReference>
<dbReference type="PRO" id="PR:Q86UV6"/>
<dbReference type="Proteomes" id="UP000005640">
    <property type="component" value="Chromosome 7"/>
</dbReference>
<dbReference type="RNAct" id="Q86UV6">
    <property type="molecule type" value="protein"/>
</dbReference>
<dbReference type="Bgee" id="ENSG00000155428">
    <property type="expression patterns" value="Expressed in body of stomach and 93 other cell types or tissues"/>
</dbReference>
<dbReference type="GO" id="GO:0005737">
    <property type="term" value="C:cytoplasm"/>
    <property type="evidence" value="ECO:0000318"/>
    <property type="project" value="GO_Central"/>
</dbReference>
<dbReference type="GO" id="GO:0005829">
    <property type="term" value="C:cytosol"/>
    <property type="evidence" value="ECO:0000314"/>
    <property type="project" value="HPA"/>
</dbReference>
<dbReference type="GO" id="GO:0061630">
    <property type="term" value="F:ubiquitin protein ligase activity"/>
    <property type="evidence" value="ECO:0000318"/>
    <property type="project" value="GO_Central"/>
</dbReference>
<dbReference type="GO" id="GO:0008270">
    <property type="term" value="F:zinc ion binding"/>
    <property type="evidence" value="ECO:0007669"/>
    <property type="project" value="UniProtKB-KW"/>
</dbReference>
<dbReference type="GO" id="GO:0045087">
    <property type="term" value="P:innate immune response"/>
    <property type="evidence" value="ECO:0000318"/>
    <property type="project" value="GO_Central"/>
</dbReference>
<dbReference type="CDD" id="cd19787">
    <property type="entry name" value="Bbox2_TRIM50-like"/>
    <property type="match status" value="1"/>
</dbReference>
<dbReference type="FunFam" id="3.30.160.60:FF:001490">
    <property type="entry name" value="E3 ubiquitin-protein ligase TRIM50"/>
    <property type="match status" value="1"/>
</dbReference>
<dbReference type="Gene3D" id="3.30.160.60">
    <property type="entry name" value="Classic Zinc Finger"/>
    <property type="match status" value="1"/>
</dbReference>
<dbReference type="Gene3D" id="3.30.40.10">
    <property type="entry name" value="Zinc/RING finger domain, C3HC4 (zinc finger)"/>
    <property type="match status" value="1"/>
</dbReference>
<dbReference type="InterPro" id="IPR050143">
    <property type="entry name" value="TRIM/RBCC"/>
</dbReference>
<dbReference type="InterPro" id="IPR027370">
    <property type="entry name" value="Znf-RING_euk"/>
</dbReference>
<dbReference type="InterPro" id="IPR000315">
    <property type="entry name" value="Znf_B-box"/>
</dbReference>
<dbReference type="InterPro" id="IPR001841">
    <property type="entry name" value="Znf_RING"/>
</dbReference>
<dbReference type="InterPro" id="IPR013083">
    <property type="entry name" value="Znf_RING/FYVE/PHD"/>
</dbReference>
<dbReference type="InterPro" id="IPR017907">
    <property type="entry name" value="Znf_RING_CS"/>
</dbReference>
<dbReference type="PANTHER" id="PTHR24103">
    <property type="entry name" value="E3 UBIQUITIN-PROTEIN LIGASE TRIM"/>
    <property type="match status" value="1"/>
</dbReference>
<dbReference type="Pfam" id="PF00643">
    <property type="entry name" value="zf-B_box"/>
    <property type="match status" value="1"/>
</dbReference>
<dbReference type="Pfam" id="PF13445">
    <property type="entry name" value="zf-RING_UBOX"/>
    <property type="match status" value="1"/>
</dbReference>
<dbReference type="SMART" id="SM00336">
    <property type="entry name" value="BBOX"/>
    <property type="match status" value="1"/>
</dbReference>
<dbReference type="SMART" id="SM00184">
    <property type="entry name" value="RING"/>
    <property type="match status" value="1"/>
</dbReference>
<dbReference type="SUPFAM" id="SSF57845">
    <property type="entry name" value="B-box zinc-binding domain"/>
    <property type="match status" value="1"/>
</dbReference>
<dbReference type="SUPFAM" id="SSF57850">
    <property type="entry name" value="RING/U-box"/>
    <property type="match status" value="1"/>
</dbReference>
<dbReference type="PROSITE" id="PS50119">
    <property type="entry name" value="ZF_BBOX"/>
    <property type="match status" value="1"/>
</dbReference>
<dbReference type="PROSITE" id="PS00518">
    <property type="entry name" value="ZF_RING_1"/>
    <property type="match status" value="1"/>
</dbReference>
<dbReference type="PROSITE" id="PS50089">
    <property type="entry name" value="ZF_RING_2"/>
    <property type="match status" value="1"/>
</dbReference>
<sequence length="250" mass="28547">MAWQVSLLELEDWLQCPICLEVFKESLMLQCGHSYCKGCLVSLSYHLDTKVRCPMCWQVVDGSSSLPNVSLAWVIEALRLPGDPEPKVCVHHRNPLSLFCEKDQELICGLCGLLGSHQHHPVTPVSTVCSRMKEELAALFSELKQEQKKVDELIAKLVKNRTRIVNESDVFSWVIRREFQELRHPVDEEKARCLEGIGGHTRGLVASLDMQLEQAQGTRERLAQAECVLEQFGNEDHHEFIWKFHSMASR</sequence>
<keyword id="KW-0025">Alternative splicing</keyword>
<keyword id="KW-0175">Coiled coil</keyword>
<keyword id="KW-0479">Metal-binding</keyword>
<keyword id="KW-1185">Reference proteome</keyword>
<keyword id="KW-0862">Zinc</keyword>
<keyword id="KW-0863">Zinc-finger</keyword>
<reference key="1">
    <citation type="journal article" date="2008" name="Eur. J. Hum. Genet.">
        <title>Williams-Beuren syndrome TRIM50 encodes an E3 ubiquitin ligase.</title>
        <authorList>
            <person name="Micale L."/>
            <person name="Fusco C."/>
            <person name="Augello B."/>
            <person name="Napolitano L.M.R."/>
            <person name="Dermitzakis E.T."/>
            <person name="Meroni G."/>
            <person name="Merla G."/>
            <person name="Reymond A."/>
        </authorList>
    </citation>
    <scope>NUCLEOTIDE SEQUENCE [MRNA] (ISOFORM 1)</scope>
</reference>
<reference key="2">
    <citation type="journal article" date="2003" name="Nature">
        <title>The DNA sequence of human chromosome 7.</title>
        <authorList>
            <person name="Hillier L.W."/>
            <person name="Fulton R.S."/>
            <person name="Fulton L.A."/>
            <person name="Graves T.A."/>
            <person name="Pepin K.H."/>
            <person name="Wagner-McPherson C."/>
            <person name="Layman D."/>
            <person name="Maas J."/>
            <person name="Jaeger S."/>
            <person name="Walker R."/>
            <person name="Wylie K."/>
            <person name="Sekhon M."/>
            <person name="Becker M.C."/>
            <person name="O'Laughlin M.D."/>
            <person name="Schaller M.E."/>
            <person name="Fewell G.A."/>
            <person name="Delehaunty K.D."/>
            <person name="Miner T.L."/>
            <person name="Nash W.E."/>
            <person name="Cordes M."/>
            <person name="Du H."/>
            <person name="Sun H."/>
            <person name="Edwards J."/>
            <person name="Bradshaw-Cordum H."/>
            <person name="Ali J."/>
            <person name="Andrews S."/>
            <person name="Isak A."/>
            <person name="Vanbrunt A."/>
            <person name="Nguyen C."/>
            <person name="Du F."/>
            <person name="Lamar B."/>
            <person name="Courtney L."/>
            <person name="Kalicki J."/>
            <person name="Ozersky P."/>
            <person name="Bielicki L."/>
            <person name="Scott K."/>
            <person name="Holmes A."/>
            <person name="Harkins R."/>
            <person name="Harris A."/>
            <person name="Strong C.M."/>
            <person name="Hou S."/>
            <person name="Tomlinson C."/>
            <person name="Dauphin-Kohlberg S."/>
            <person name="Kozlowicz-Reilly A."/>
            <person name="Leonard S."/>
            <person name="Rohlfing T."/>
            <person name="Rock S.M."/>
            <person name="Tin-Wollam A.-M."/>
            <person name="Abbott A."/>
            <person name="Minx P."/>
            <person name="Maupin R."/>
            <person name="Strowmatt C."/>
            <person name="Latreille P."/>
            <person name="Miller N."/>
            <person name="Johnson D."/>
            <person name="Murray J."/>
            <person name="Woessner J.P."/>
            <person name="Wendl M.C."/>
            <person name="Yang S.-P."/>
            <person name="Schultz B.R."/>
            <person name="Wallis J.W."/>
            <person name="Spieth J."/>
            <person name="Bieri T.A."/>
            <person name="Nelson J.O."/>
            <person name="Berkowicz N."/>
            <person name="Wohldmann P.E."/>
            <person name="Cook L.L."/>
            <person name="Hickenbotham M.T."/>
            <person name="Eldred J."/>
            <person name="Williams D."/>
            <person name="Bedell J.A."/>
            <person name="Mardis E.R."/>
            <person name="Clifton S.W."/>
            <person name="Chissoe S.L."/>
            <person name="Marra M.A."/>
            <person name="Raymond C."/>
            <person name="Haugen E."/>
            <person name="Gillett W."/>
            <person name="Zhou Y."/>
            <person name="James R."/>
            <person name="Phelps K."/>
            <person name="Iadanoto S."/>
            <person name="Bubb K."/>
            <person name="Simms E."/>
            <person name="Levy R."/>
            <person name="Clendenning J."/>
            <person name="Kaul R."/>
            <person name="Kent W.J."/>
            <person name="Furey T.S."/>
            <person name="Baertsch R.A."/>
            <person name="Brent M.R."/>
            <person name="Keibler E."/>
            <person name="Flicek P."/>
            <person name="Bork P."/>
            <person name="Suyama M."/>
            <person name="Bailey J.A."/>
            <person name="Portnoy M.E."/>
            <person name="Torrents D."/>
            <person name="Chinwalla A.T."/>
            <person name="Gish W.R."/>
            <person name="Eddy S.R."/>
            <person name="McPherson J.D."/>
            <person name="Olson M.V."/>
            <person name="Eichler E.E."/>
            <person name="Green E.D."/>
            <person name="Waterston R.H."/>
            <person name="Wilson R.K."/>
        </authorList>
    </citation>
    <scope>NUCLEOTIDE SEQUENCE [LARGE SCALE GENOMIC DNA]</scope>
</reference>
<reference key="3">
    <citation type="journal article" date="2004" name="Genome Res.">
        <title>The status, quality, and expansion of the NIH full-length cDNA project: the Mammalian Gene Collection (MGC).</title>
        <authorList>
            <consortium name="The MGC Project Team"/>
        </authorList>
    </citation>
    <scope>NUCLEOTIDE SEQUENCE [LARGE SCALE MRNA] (ISOFORM 2)</scope>
    <scope>VARIANT ARG-13</scope>
    <source>
        <tissue>Lung</tissue>
    </source>
</reference>
<organism>
    <name type="scientific">Homo sapiens</name>
    <name type="common">Human</name>
    <dbReference type="NCBI Taxonomy" id="9606"/>
    <lineage>
        <taxon>Eukaryota</taxon>
        <taxon>Metazoa</taxon>
        <taxon>Chordata</taxon>
        <taxon>Craniata</taxon>
        <taxon>Vertebrata</taxon>
        <taxon>Euteleostomi</taxon>
        <taxon>Mammalia</taxon>
        <taxon>Eutheria</taxon>
        <taxon>Euarchontoglires</taxon>
        <taxon>Primates</taxon>
        <taxon>Haplorrhini</taxon>
        <taxon>Catarrhini</taxon>
        <taxon>Hominidae</taxon>
        <taxon>Homo</taxon>
    </lineage>
</organism>
<name>TRI74_HUMAN</name>
<protein>
    <recommendedName>
        <fullName>Tripartite motif-containing protein 74</fullName>
    </recommendedName>
    <alternativeName>
        <fullName>Tripartite motif-containing protein 50C</fullName>
    </alternativeName>
</protein>